<gene>
    <name evidence="1" type="primary">mdh</name>
    <name type="ordered locus">Ping_0297</name>
</gene>
<name>MDH_PSYIN</name>
<accession>A1SRP8</accession>
<comment type="function">
    <text evidence="1">Catalyzes the reversible oxidation of malate to oxaloacetate.</text>
</comment>
<comment type="catalytic activity">
    <reaction evidence="1">
        <text>(S)-malate + NAD(+) = oxaloacetate + NADH + H(+)</text>
        <dbReference type="Rhea" id="RHEA:21432"/>
        <dbReference type="ChEBI" id="CHEBI:15378"/>
        <dbReference type="ChEBI" id="CHEBI:15589"/>
        <dbReference type="ChEBI" id="CHEBI:16452"/>
        <dbReference type="ChEBI" id="CHEBI:57540"/>
        <dbReference type="ChEBI" id="CHEBI:57945"/>
        <dbReference type="EC" id="1.1.1.37"/>
    </reaction>
</comment>
<comment type="subunit">
    <text evidence="1">Homodimer.</text>
</comment>
<comment type="similarity">
    <text evidence="1">Belongs to the LDH/MDH superfamily. MDH type 1 family.</text>
</comment>
<dbReference type="EC" id="1.1.1.37" evidence="1"/>
<dbReference type="EMBL" id="CP000510">
    <property type="protein sequence ID" value="ABM02163.1"/>
    <property type="molecule type" value="Genomic_DNA"/>
</dbReference>
<dbReference type="RefSeq" id="WP_011768722.1">
    <property type="nucleotide sequence ID" value="NC_008709.1"/>
</dbReference>
<dbReference type="SMR" id="A1SRP8"/>
<dbReference type="STRING" id="357804.Ping_0297"/>
<dbReference type="KEGG" id="pin:Ping_0297"/>
<dbReference type="eggNOG" id="COG0039">
    <property type="taxonomic scope" value="Bacteria"/>
</dbReference>
<dbReference type="HOGENOM" id="CLU_047181_1_0_6"/>
<dbReference type="OrthoDB" id="9802969at2"/>
<dbReference type="Proteomes" id="UP000000639">
    <property type="component" value="Chromosome"/>
</dbReference>
<dbReference type="GO" id="GO:0005737">
    <property type="term" value="C:cytoplasm"/>
    <property type="evidence" value="ECO:0007669"/>
    <property type="project" value="TreeGrafter"/>
</dbReference>
<dbReference type="GO" id="GO:0030060">
    <property type="term" value="F:L-malate dehydrogenase (NAD+) activity"/>
    <property type="evidence" value="ECO:0007669"/>
    <property type="project" value="UniProtKB-UniRule"/>
</dbReference>
<dbReference type="GO" id="GO:0006108">
    <property type="term" value="P:malate metabolic process"/>
    <property type="evidence" value="ECO:0007669"/>
    <property type="project" value="InterPro"/>
</dbReference>
<dbReference type="GO" id="GO:0006099">
    <property type="term" value="P:tricarboxylic acid cycle"/>
    <property type="evidence" value="ECO:0007669"/>
    <property type="project" value="UniProtKB-UniRule"/>
</dbReference>
<dbReference type="CDD" id="cd01337">
    <property type="entry name" value="MDH_glyoxysomal_mitochondrial"/>
    <property type="match status" value="1"/>
</dbReference>
<dbReference type="FunFam" id="3.40.50.720:FF:000017">
    <property type="entry name" value="Malate dehydrogenase"/>
    <property type="match status" value="1"/>
</dbReference>
<dbReference type="FunFam" id="3.90.110.10:FF:000001">
    <property type="entry name" value="Malate dehydrogenase"/>
    <property type="match status" value="1"/>
</dbReference>
<dbReference type="Gene3D" id="3.90.110.10">
    <property type="entry name" value="Lactate dehydrogenase/glycoside hydrolase, family 4, C-terminal"/>
    <property type="match status" value="1"/>
</dbReference>
<dbReference type="Gene3D" id="3.40.50.720">
    <property type="entry name" value="NAD(P)-binding Rossmann-like Domain"/>
    <property type="match status" value="1"/>
</dbReference>
<dbReference type="HAMAP" id="MF_01516">
    <property type="entry name" value="Malate_dehydrog_1"/>
    <property type="match status" value="1"/>
</dbReference>
<dbReference type="InterPro" id="IPR001557">
    <property type="entry name" value="L-lactate/malate_DH"/>
</dbReference>
<dbReference type="InterPro" id="IPR022383">
    <property type="entry name" value="Lactate/malate_DH_C"/>
</dbReference>
<dbReference type="InterPro" id="IPR001236">
    <property type="entry name" value="Lactate/malate_DH_N"/>
</dbReference>
<dbReference type="InterPro" id="IPR015955">
    <property type="entry name" value="Lactate_DH/Glyco_Ohase_4_C"/>
</dbReference>
<dbReference type="InterPro" id="IPR001252">
    <property type="entry name" value="Malate_DH_AS"/>
</dbReference>
<dbReference type="InterPro" id="IPR010097">
    <property type="entry name" value="Malate_DH_type1"/>
</dbReference>
<dbReference type="InterPro" id="IPR023958">
    <property type="entry name" value="Malate_DH_type1_bac"/>
</dbReference>
<dbReference type="InterPro" id="IPR036291">
    <property type="entry name" value="NAD(P)-bd_dom_sf"/>
</dbReference>
<dbReference type="NCBIfam" id="TIGR01772">
    <property type="entry name" value="MDH_euk_gproteo"/>
    <property type="match status" value="1"/>
</dbReference>
<dbReference type="PANTHER" id="PTHR11540">
    <property type="entry name" value="MALATE AND LACTATE DEHYDROGENASE"/>
    <property type="match status" value="1"/>
</dbReference>
<dbReference type="PANTHER" id="PTHR11540:SF16">
    <property type="entry name" value="MALATE DEHYDROGENASE, MITOCHONDRIAL"/>
    <property type="match status" value="1"/>
</dbReference>
<dbReference type="Pfam" id="PF02866">
    <property type="entry name" value="Ldh_1_C"/>
    <property type="match status" value="1"/>
</dbReference>
<dbReference type="Pfam" id="PF00056">
    <property type="entry name" value="Ldh_1_N"/>
    <property type="match status" value="1"/>
</dbReference>
<dbReference type="PIRSF" id="PIRSF000102">
    <property type="entry name" value="Lac_mal_DH"/>
    <property type="match status" value="1"/>
</dbReference>
<dbReference type="SUPFAM" id="SSF56327">
    <property type="entry name" value="LDH C-terminal domain-like"/>
    <property type="match status" value="1"/>
</dbReference>
<dbReference type="SUPFAM" id="SSF51735">
    <property type="entry name" value="NAD(P)-binding Rossmann-fold domains"/>
    <property type="match status" value="1"/>
</dbReference>
<dbReference type="PROSITE" id="PS00068">
    <property type="entry name" value="MDH"/>
    <property type="match status" value="1"/>
</dbReference>
<protein>
    <recommendedName>
        <fullName evidence="1">Malate dehydrogenase</fullName>
        <ecNumber evidence="1">1.1.1.37</ecNumber>
    </recommendedName>
</protein>
<reference key="1">
    <citation type="journal article" date="2008" name="BMC Genomics">
        <title>Genomics of an extreme psychrophile, Psychromonas ingrahamii.</title>
        <authorList>
            <person name="Riley M."/>
            <person name="Staley J.T."/>
            <person name="Danchin A."/>
            <person name="Wang T.Z."/>
            <person name="Brettin T.S."/>
            <person name="Hauser L.J."/>
            <person name="Land M.L."/>
            <person name="Thompson L.S."/>
        </authorList>
    </citation>
    <scope>NUCLEOTIDE SEQUENCE [LARGE SCALE GENOMIC DNA]</scope>
    <source>
        <strain>DSM 17664 / CCUG 51855 / 37</strain>
    </source>
</reference>
<proteinExistence type="inferred from homology"/>
<feature type="chain" id="PRO_0000294299" description="Malate dehydrogenase">
    <location>
        <begin position="1"/>
        <end position="319"/>
    </location>
</feature>
<feature type="active site" description="Proton acceptor" evidence="1">
    <location>
        <position position="177"/>
    </location>
</feature>
<feature type="binding site" evidence="1">
    <location>
        <begin position="7"/>
        <end position="13"/>
    </location>
    <ligand>
        <name>NAD(+)</name>
        <dbReference type="ChEBI" id="CHEBI:57540"/>
    </ligand>
</feature>
<feature type="binding site" evidence="1">
    <location>
        <position position="34"/>
    </location>
    <ligand>
        <name>NAD(+)</name>
        <dbReference type="ChEBI" id="CHEBI:57540"/>
    </ligand>
</feature>
<feature type="binding site" evidence="1">
    <location>
        <position position="81"/>
    </location>
    <ligand>
        <name>substrate</name>
    </ligand>
</feature>
<feature type="binding site" evidence="1">
    <location>
        <position position="87"/>
    </location>
    <ligand>
        <name>substrate</name>
    </ligand>
</feature>
<feature type="binding site" evidence="1">
    <location>
        <position position="94"/>
    </location>
    <ligand>
        <name>NAD(+)</name>
        <dbReference type="ChEBI" id="CHEBI:57540"/>
    </ligand>
</feature>
<feature type="binding site" evidence="1">
    <location>
        <begin position="117"/>
        <end position="119"/>
    </location>
    <ligand>
        <name>NAD(+)</name>
        <dbReference type="ChEBI" id="CHEBI:57540"/>
    </ligand>
</feature>
<feature type="binding site" evidence="1">
    <location>
        <position position="119"/>
    </location>
    <ligand>
        <name>substrate</name>
    </ligand>
</feature>
<feature type="binding site" evidence="1">
    <location>
        <position position="153"/>
    </location>
    <ligand>
        <name>substrate</name>
    </ligand>
</feature>
<feature type="binding site" evidence="1">
    <location>
        <position position="227"/>
    </location>
    <ligand>
        <name>NAD(+)</name>
        <dbReference type="ChEBI" id="CHEBI:57540"/>
    </ligand>
</feature>
<organism>
    <name type="scientific">Psychromonas ingrahamii (strain DSM 17664 / CCUG 51855 / 37)</name>
    <dbReference type="NCBI Taxonomy" id="357804"/>
    <lineage>
        <taxon>Bacteria</taxon>
        <taxon>Pseudomonadati</taxon>
        <taxon>Pseudomonadota</taxon>
        <taxon>Gammaproteobacteria</taxon>
        <taxon>Alteromonadales</taxon>
        <taxon>Psychromonadaceae</taxon>
        <taxon>Psychromonas</taxon>
    </lineage>
</organism>
<keyword id="KW-0520">NAD</keyword>
<keyword id="KW-0560">Oxidoreductase</keyword>
<keyword id="KW-1185">Reference proteome</keyword>
<keyword id="KW-0816">Tricarboxylic acid cycle</keyword>
<evidence type="ECO:0000255" key="1">
    <source>
        <dbReference type="HAMAP-Rule" id="MF_01516"/>
    </source>
</evidence>
<sequence length="319" mass="32997">MKIAVLGAAGGIGQALALLLKLDLPANSILSLYDLAPVTPGVAKDLSHIPTSVKVEGFAGTDPTAAIEGADVILISAGVARKPGMDRSDLFNINAGIIKNLVAKVAEVAPEACIGIITNPVNTTVAIAAEVLKAAGVYNKNKLFGITTLDVIRAEEFVAELKGLPSEDVRVNVIGGHSGTTILPVLSQIQGVSFTDQEVIDLTSRIQNAGTEVVEAKAGGGSATLSMACAASRFAIQLVHALSGKQGIIQNAYVDGGNPASPFFTQPLLLGKNGIDKVLPYGELSSFEETKKEEMLSVLHADIEMGIDFVSKTLAAEVS</sequence>